<comment type="function">
    <text evidence="1">Major capsid protein that self-associates to form penton base pentamers, each in the shape of a pentagon, situated at the 12 vertices of the pseudo T=25 capsid. Involved in virus secondary attachment to host cell after initial attachment by the fiber protein, and in endocytosis of virions. As the virus enters the host cell, penton proteins are shed concomitant with virion acidification in the endosome.</text>
</comment>
<comment type="subunit">
    <text evidence="1">Interacts with the fiber protein (via N-terminal tail region). Interacts with the capsid vertex protein; this interaction binds the penton base to neighboring peripentonal hexons.</text>
</comment>
<comment type="subcellular location">
    <subcellularLocation>
        <location evidence="1">Virion</location>
    </subcellularLocation>
    <subcellularLocation>
        <location evidence="1">Host nucleus</location>
    </subcellularLocation>
    <text evidence="1">Located at each vertex of the virion.</text>
</comment>
<comment type="induction">
    <text evidence="1">Expressed in the late phase of the viral replicative cycle.</text>
</comment>
<comment type="miscellaneous">
    <text evidence="1">All late proteins expressed from the major late promoter are produced by alternative splicing and alternative polyadenylation of the same gene giving rise to non-overlapping ORFs. A leader sequence is present in the N-terminus of all these mRNAs and is recognized by the viral shutoff protein to provide expression although conventional translation via ribosome scanning from the cap has been shut off in the host cell.</text>
</comment>
<comment type="similarity">
    <text evidence="1">Belongs to the adenoviridae penton family.</text>
</comment>
<evidence type="ECO:0000255" key="1">
    <source>
        <dbReference type="HAMAP-Rule" id="MF_04052"/>
    </source>
</evidence>
<dbReference type="EMBL" id="U95843">
    <property type="protein sequence ID" value="AAB53754.1"/>
    <property type="molecule type" value="Genomic_DNA"/>
</dbReference>
<dbReference type="SMR" id="O10439"/>
<dbReference type="GO" id="GO:0042025">
    <property type="term" value="C:host cell nucleus"/>
    <property type="evidence" value="ECO:0007669"/>
    <property type="project" value="UniProtKB-SubCell"/>
</dbReference>
<dbReference type="GO" id="GO:0039623">
    <property type="term" value="C:T=25 icosahedral viral capsid"/>
    <property type="evidence" value="ECO:0007669"/>
    <property type="project" value="UniProtKB-UniRule"/>
</dbReference>
<dbReference type="GO" id="GO:0005198">
    <property type="term" value="F:structural molecule activity"/>
    <property type="evidence" value="ECO:0007669"/>
    <property type="project" value="UniProtKB-UniRule"/>
</dbReference>
<dbReference type="GO" id="GO:0075509">
    <property type="term" value="P:endocytosis involved in viral entry into host cell"/>
    <property type="evidence" value="ECO:0007669"/>
    <property type="project" value="UniProtKB-KW"/>
</dbReference>
<dbReference type="GO" id="GO:0019062">
    <property type="term" value="P:virion attachment to host cell"/>
    <property type="evidence" value="ECO:0007669"/>
    <property type="project" value="UniProtKB-UniRule"/>
</dbReference>
<dbReference type="Gene3D" id="3.90.1620.10">
    <property type="entry name" value="adenovirus 2 penton base, domain 2"/>
    <property type="match status" value="1"/>
</dbReference>
<dbReference type="Gene3D" id="2.60.120.550">
    <property type="entry name" value="Penton protein, domain 1"/>
    <property type="match status" value="1"/>
</dbReference>
<dbReference type="HAMAP" id="MF_04052">
    <property type="entry name" value="ADV_CAPSP"/>
    <property type="match status" value="1"/>
</dbReference>
<dbReference type="InterPro" id="IPR002605">
    <property type="entry name" value="Adeno_Penton_B"/>
</dbReference>
<dbReference type="Pfam" id="PF01686">
    <property type="entry name" value="Adeno_Penton_B"/>
    <property type="match status" value="1"/>
</dbReference>
<protein>
    <recommendedName>
        <fullName evidence="1">Penton protein</fullName>
        <shortName evidence="1">CP-P</shortName>
    </recommendedName>
    <alternativeName>
        <fullName evidence="1">Penton base protein</fullName>
    </alternativeName>
    <alternativeName>
        <fullName evidence="1">Protein III</fullName>
    </alternativeName>
</protein>
<sequence length="489" mass="55383">MSRYGNAPPPYEEVVSVATPSYVQQPWVPPRYFAPTEGRNSIVYDQFPTCYDTTKLFLVDNKSADITDLNMQNDHSHFATTVVQNSEFTPREASTQHITLDNRSRWGAKLKTLIQTNLPSVTDYMYTNSLRVKLMESYDEATGTATYEWHDITLPEGNFDSGRIIDLLNNAIWELYLTYGRQNGVREDQIGIKFDTRNFRLGFDPLTNLIMPGHYTYEYFHPDIVLMKGCAVDFSKTRLNNVLGWRKRYPYQPGFVITYDDLVGGDIPPLLDLAAYLKKPREGAGGPIIRALQKDSKGRSYHVQYTDLGEVTGYRSLYLAYNYTSDVTHLRKSTVRSWLVLTAPDITGGAQQLYWSLPDMALAPTTFRPSGQTPATFPVVSTEPLPIAARTIFNAQPGYAQIVNQNTSQTMVYNRFPENAILMRPPQPFMVQVPENVTTVTDHGTLPLQNTLSGVQRVAVTDSRRRTCPYVYKCAATLEPHIMSSRTLQ</sequence>
<organism>
    <name type="scientific">Murine adenovirus A serotype 1</name>
    <name type="common">MAdV-1</name>
    <name type="synonym">Murine adenovirus 1</name>
    <dbReference type="NCBI Taxonomy" id="10530"/>
    <lineage>
        <taxon>Viruses</taxon>
        <taxon>Varidnaviria</taxon>
        <taxon>Bamfordvirae</taxon>
        <taxon>Preplasmiviricota</taxon>
        <taxon>Tectiliviricetes</taxon>
        <taxon>Rowavirales</taxon>
        <taxon>Adenoviridae</taxon>
        <taxon>Mastadenovirus</taxon>
        <taxon>Murine mastadenovirus A</taxon>
    </lineage>
</organism>
<accession>O10439</accession>
<reference key="1">
    <citation type="submission" date="1997-05" db="EMBL/GenBank/DDBJ databases">
        <authorList>
            <person name="Meissner J.D."/>
            <person name="Hirsch G.N."/>
            <person name="Larue E.A."/>
            <person name="Fulcher R.A."/>
            <person name="Spindler K.R."/>
        </authorList>
    </citation>
    <scope>NUCLEOTIDE SEQUENCE [GENOMIC DNA]</scope>
</reference>
<feature type="chain" id="PRO_0000221881" description="Penton protein">
    <location>
        <begin position="1"/>
        <end position="489"/>
    </location>
</feature>
<keyword id="KW-0167">Capsid protein</keyword>
<keyword id="KW-1048">Host nucleus</keyword>
<keyword id="KW-0945">Host-virus interaction</keyword>
<keyword id="KW-0426">Late protein</keyword>
<keyword id="KW-1148">T=25 icosahedral capsid protein</keyword>
<keyword id="KW-1161">Viral attachment to host cell</keyword>
<keyword id="KW-1162">Viral penetration into host cytoplasm</keyword>
<keyword id="KW-0946">Virion</keyword>
<keyword id="KW-1164">Virus endocytosis by host</keyword>
<keyword id="KW-1160">Virus entry into host cell</keyword>
<organismHost>
    <name type="scientific">Mus musculus</name>
    <name type="common">Mouse</name>
    <dbReference type="NCBI Taxonomy" id="10090"/>
</organismHost>
<proteinExistence type="inferred from homology"/>
<name>CAPSP_ADEM1</name>
<gene>
    <name evidence="1" type="primary">L2</name>
</gene>